<reference key="1">
    <citation type="journal article" date="2005" name="Science">
        <title>The transcriptional landscape of the mammalian genome.</title>
        <authorList>
            <person name="Carninci P."/>
            <person name="Kasukawa T."/>
            <person name="Katayama S."/>
            <person name="Gough J."/>
            <person name="Frith M.C."/>
            <person name="Maeda N."/>
            <person name="Oyama R."/>
            <person name="Ravasi T."/>
            <person name="Lenhard B."/>
            <person name="Wells C."/>
            <person name="Kodzius R."/>
            <person name="Shimokawa K."/>
            <person name="Bajic V.B."/>
            <person name="Brenner S.E."/>
            <person name="Batalov S."/>
            <person name="Forrest A.R."/>
            <person name="Zavolan M."/>
            <person name="Davis M.J."/>
            <person name="Wilming L.G."/>
            <person name="Aidinis V."/>
            <person name="Allen J.E."/>
            <person name="Ambesi-Impiombato A."/>
            <person name="Apweiler R."/>
            <person name="Aturaliya R.N."/>
            <person name="Bailey T.L."/>
            <person name="Bansal M."/>
            <person name="Baxter L."/>
            <person name="Beisel K.W."/>
            <person name="Bersano T."/>
            <person name="Bono H."/>
            <person name="Chalk A.M."/>
            <person name="Chiu K.P."/>
            <person name="Choudhary V."/>
            <person name="Christoffels A."/>
            <person name="Clutterbuck D.R."/>
            <person name="Crowe M.L."/>
            <person name="Dalla E."/>
            <person name="Dalrymple B.P."/>
            <person name="de Bono B."/>
            <person name="Della Gatta G."/>
            <person name="di Bernardo D."/>
            <person name="Down T."/>
            <person name="Engstrom P."/>
            <person name="Fagiolini M."/>
            <person name="Faulkner G."/>
            <person name="Fletcher C.F."/>
            <person name="Fukushima T."/>
            <person name="Furuno M."/>
            <person name="Futaki S."/>
            <person name="Gariboldi M."/>
            <person name="Georgii-Hemming P."/>
            <person name="Gingeras T.R."/>
            <person name="Gojobori T."/>
            <person name="Green R.E."/>
            <person name="Gustincich S."/>
            <person name="Harbers M."/>
            <person name="Hayashi Y."/>
            <person name="Hensch T.K."/>
            <person name="Hirokawa N."/>
            <person name="Hill D."/>
            <person name="Huminiecki L."/>
            <person name="Iacono M."/>
            <person name="Ikeo K."/>
            <person name="Iwama A."/>
            <person name="Ishikawa T."/>
            <person name="Jakt M."/>
            <person name="Kanapin A."/>
            <person name="Katoh M."/>
            <person name="Kawasawa Y."/>
            <person name="Kelso J."/>
            <person name="Kitamura H."/>
            <person name="Kitano H."/>
            <person name="Kollias G."/>
            <person name="Krishnan S.P."/>
            <person name="Kruger A."/>
            <person name="Kummerfeld S.K."/>
            <person name="Kurochkin I.V."/>
            <person name="Lareau L.F."/>
            <person name="Lazarevic D."/>
            <person name="Lipovich L."/>
            <person name="Liu J."/>
            <person name="Liuni S."/>
            <person name="McWilliam S."/>
            <person name="Madan Babu M."/>
            <person name="Madera M."/>
            <person name="Marchionni L."/>
            <person name="Matsuda H."/>
            <person name="Matsuzawa S."/>
            <person name="Miki H."/>
            <person name="Mignone F."/>
            <person name="Miyake S."/>
            <person name="Morris K."/>
            <person name="Mottagui-Tabar S."/>
            <person name="Mulder N."/>
            <person name="Nakano N."/>
            <person name="Nakauchi H."/>
            <person name="Ng P."/>
            <person name="Nilsson R."/>
            <person name="Nishiguchi S."/>
            <person name="Nishikawa S."/>
            <person name="Nori F."/>
            <person name="Ohara O."/>
            <person name="Okazaki Y."/>
            <person name="Orlando V."/>
            <person name="Pang K.C."/>
            <person name="Pavan W.J."/>
            <person name="Pavesi G."/>
            <person name="Pesole G."/>
            <person name="Petrovsky N."/>
            <person name="Piazza S."/>
            <person name="Reed J."/>
            <person name="Reid J.F."/>
            <person name="Ring B.Z."/>
            <person name="Ringwald M."/>
            <person name="Rost B."/>
            <person name="Ruan Y."/>
            <person name="Salzberg S.L."/>
            <person name="Sandelin A."/>
            <person name="Schneider C."/>
            <person name="Schoenbach C."/>
            <person name="Sekiguchi K."/>
            <person name="Semple C.A."/>
            <person name="Seno S."/>
            <person name="Sessa L."/>
            <person name="Sheng Y."/>
            <person name="Shibata Y."/>
            <person name="Shimada H."/>
            <person name="Shimada K."/>
            <person name="Silva D."/>
            <person name="Sinclair B."/>
            <person name="Sperling S."/>
            <person name="Stupka E."/>
            <person name="Sugiura K."/>
            <person name="Sultana R."/>
            <person name="Takenaka Y."/>
            <person name="Taki K."/>
            <person name="Tammoja K."/>
            <person name="Tan S.L."/>
            <person name="Tang S."/>
            <person name="Taylor M.S."/>
            <person name="Tegner J."/>
            <person name="Teichmann S.A."/>
            <person name="Ueda H.R."/>
            <person name="van Nimwegen E."/>
            <person name="Verardo R."/>
            <person name="Wei C.L."/>
            <person name="Yagi K."/>
            <person name="Yamanishi H."/>
            <person name="Zabarovsky E."/>
            <person name="Zhu S."/>
            <person name="Zimmer A."/>
            <person name="Hide W."/>
            <person name="Bult C."/>
            <person name="Grimmond S.M."/>
            <person name="Teasdale R.D."/>
            <person name="Liu E.T."/>
            <person name="Brusic V."/>
            <person name="Quackenbush J."/>
            <person name="Wahlestedt C."/>
            <person name="Mattick J.S."/>
            <person name="Hume D.A."/>
            <person name="Kai C."/>
            <person name="Sasaki D."/>
            <person name="Tomaru Y."/>
            <person name="Fukuda S."/>
            <person name="Kanamori-Katayama M."/>
            <person name="Suzuki M."/>
            <person name="Aoki J."/>
            <person name="Arakawa T."/>
            <person name="Iida J."/>
            <person name="Imamura K."/>
            <person name="Itoh M."/>
            <person name="Kato T."/>
            <person name="Kawaji H."/>
            <person name="Kawagashira N."/>
            <person name="Kawashima T."/>
            <person name="Kojima M."/>
            <person name="Kondo S."/>
            <person name="Konno H."/>
            <person name="Nakano K."/>
            <person name="Ninomiya N."/>
            <person name="Nishio T."/>
            <person name="Okada M."/>
            <person name="Plessy C."/>
            <person name="Shibata K."/>
            <person name="Shiraki T."/>
            <person name="Suzuki S."/>
            <person name="Tagami M."/>
            <person name="Waki K."/>
            <person name="Watahiki A."/>
            <person name="Okamura-Oho Y."/>
            <person name="Suzuki H."/>
            <person name="Kawai J."/>
            <person name="Hayashizaki Y."/>
        </authorList>
    </citation>
    <scope>NUCLEOTIDE SEQUENCE [LARGE SCALE MRNA]</scope>
    <source>
        <strain>C57BL/6J</strain>
    </source>
</reference>
<reference key="2">
    <citation type="journal article" date="2004" name="Genome Res.">
        <title>The status, quality, and expansion of the NIH full-length cDNA project: the Mammalian Gene Collection (MGC).</title>
        <authorList>
            <consortium name="The MGC Project Team"/>
        </authorList>
    </citation>
    <scope>NUCLEOTIDE SEQUENCE [LARGE SCALE MRNA]</scope>
    <source>
        <strain>FVB/N</strain>
        <tissue>Mammary tumor</tissue>
    </source>
</reference>
<organism>
    <name type="scientific">Mus musculus</name>
    <name type="common">Mouse</name>
    <dbReference type="NCBI Taxonomy" id="10090"/>
    <lineage>
        <taxon>Eukaryota</taxon>
        <taxon>Metazoa</taxon>
        <taxon>Chordata</taxon>
        <taxon>Craniata</taxon>
        <taxon>Vertebrata</taxon>
        <taxon>Euteleostomi</taxon>
        <taxon>Mammalia</taxon>
        <taxon>Eutheria</taxon>
        <taxon>Euarchontoglires</taxon>
        <taxon>Glires</taxon>
        <taxon>Rodentia</taxon>
        <taxon>Myomorpha</taxon>
        <taxon>Muroidea</taxon>
        <taxon>Muridae</taxon>
        <taxon>Murinae</taxon>
        <taxon>Mus</taxon>
        <taxon>Mus</taxon>
    </lineage>
</organism>
<protein>
    <recommendedName>
        <fullName>Glioma pathogenesis-related protein 1</fullName>
        <shortName>GliPR 1</shortName>
    </recommendedName>
</protein>
<proteinExistence type="evidence at transcript level"/>
<feature type="signal peptide" evidence="1">
    <location>
        <begin position="1"/>
        <end position="17"/>
    </location>
</feature>
<feature type="chain" id="PRO_0000006271" description="Glioma pathogenesis-related protein 1">
    <location>
        <begin position="18"/>
        <end position="255"/>
    </location>
</feature>
<feature type="transmembrane region" description="Helical" evidence="1">
    <location>
        <begin position="224"/>
        <end position="244"/>
    </location>
</feature>
<feature type="domain" description="SCP">
    <location>
        <begin position="39"/>
        <end position="164"/>
    </location>
</feature>
<keyword id="KW-0472">Membrane</keyword>
<keyword id="KW-1185">Reference proteome</keyword>
<keyword id="KW-0732">Signal</keyword>
<keyword id="KW-0812">Transmembrane</keyword>
<keyword id="KW-1133">Transmembrane helix</keyword>
<name>GLIP1_MOUSE</name>
<sequence length="255" mass="29129">MQVILAVIVWMASSVSSSSFTASTLPDITNEDFIKECVQVHNQLRSKVSPPARNMLYMSWDPKLAQIAKAWTKSCEFKHNPQLHSRIHPNFTALGENIWLGSLSIFSVSSAISAWYEEIKHYDFSTRKCRHVCGHYTQVVWADSYKLGCAVQLCPNGANFICDYGPAGNYPTWPYKQGATCSDCPKDDKCLNSLCINPRRDQVSRYYSVDYPDWPIYLRNRYTSLFLIAKSVLLLLSVIITIWVKHKYPNLVLLD</sequence>
<comment type="subcellular location">
    <subcellularLocation>
        <location evidence="2">Membrane</location>
        <topology evidence="2">Single-pass membrane protein</topology>
    </subcellularLocation>
</comment>
<comment type="similarity">
    <text evidence="2">Belongs to the CRISP family.</text>
</comment>
<gene>
    <name type="primary">Glipr1</name>
</gene>
<dbReference type="EMBL" id="AK010768">
    <property type="protein sequence ID" value="BAB27168.1"/>
    <property type="molecule type" value="mRNA"/>
</dbReference>
<dbReference type="EMBL" id="BC025083">
    <property type="protein sequence ID" value="AAH25083.1"/>
    <property type="molecule type" value="mRNA"/>
</dbReference>
<dbReference type="CCDS" id="CCDS24169.1"/>
<dbReference type="RefSeq" id="NP_082884.1">
    <property type="nucleotide sequence ID" value="NM_028608.3"/>
</dbReference>
<dbReference type="SMR" id="Q9CWG1"/>
<dbReference type="BioGRID" id="216192">
    <property type="interactions" value="1"/>
</dbReference>
<dbReference type="FunCoup" id="Q9CWG1">
    <property type="interactions" value="116"/>
</dbReference>
<dbReference type="STRING" id="10090.ENSMUSP00000123990"/>
<dbReference type="PhosphoSitePlus" id="Q9CWG1"/>
<dbReference type="PaxDb" id="10090-ENSMUSP00000123990"/>
<dbReference type="ProteomicsDB" id="266808"/>
<dbReference type="Antibodypedia" id="2474">
    <property type="antibodies" value="157 antibodies from 28 providers"/>
</dbReference>
<dbReference type="DNASU" id="73690"/>
<dbReference type="Ensembl" id="ENSMUST00000074805.12">
    <property type="protein sequence ID" value="ENSMUSP00000074359.6"/>
    <property type="gene ID" value="ENSMUSG00000056888.12"/>
</dbReference>
<dbReference type="Ensembl" id="ENSMUST00000162508.9">
    <property type="protein sequence ID" value="ENSMUSP00000123990.3"/>
    <property type="gene ID" value="ENSMUSG00000056888.12"/>
</dbReference>
<dbReference type="GeneID" id="73690"/>
<dbReference type="KEGG" id="mmu:73690"/>
<dbReference type="UCSC" id="uc007haj.2">
    <property type="organism name" value="mouse"/>
</dbReference>
<dbReference type="AGR" id="MGI:1920940"/>
<dbReference type="CTD" id="11010"/>
<dbReference type="MGI" id="MGI:1920940">
    <property type="gene designation" value="Glipr1"/>
</dbReference>
<dbReference type="VEuPathDB" id="HostDB:ENSMUSG00000056888"/>
<dbReference type="eggNOG" id="KOG3017">
    <property type="taxonomic scope" value="Eukaryota"/>
</dbReference>
<dbReference type="GeneTree" id="ENSGT00940000160727"/>
<dbReference type="HOGENOM" id="CLU_035730_2_0_1"/>
<dbReference type="InParanoid" id="Q9CWG1"/>
<dbReference type="OMA" id="NEIQYYD"/>
<dbReference type="OrthoDB" id="43654at2759"/>
<dbReference type="PhylomeDB" id="Q9CWG1"/>
<dbReference type="TreeFam" id="TF316148"/>
<dbReference type="Reactome" id="R-MMU-6798695">
    <property type="pathway name" value="Neutrophil degranulation"/>
</dbReference>
<dbReference type="BioGRID-ORCS" id="73690">
    <property type="hits" value="0 hits in 79 CRISPR screens"/>
</dbReference>
<dbReference type="PRO" id="PR:Q9CWG1"/>
<dbReference type="Proteomes" id="UP000000589">
    <property type="component" value="Chromosome 10"/>
</dbReference>
<dbReference type="RNAct" id="Q9CWG1">
    <property type="molecule type" value="protein"/>
</dbReference>
<dbReference type="Bgee" id="ENSMUSG00000056888">
    <property type="expression patterns" value="Expressed in granulocyte and 127 other cell types or tissues"/>
</dbReference>
<dbReference type="ExpressionAtlas" id="Q9CWG1">
    <property type="expression patterns" value="baseline and differential"/>
</dbReference>
<dbReference type="GO" id="GO:0005576">
    <property type="term" value="C:extracellular region"/>
    <property type="evidence" value="ECO:0007669"/>
    <property type="project" value="InterPro"/>
</dbReference>
<dbReference type="GO" id="GO:0016020">
    <property type="term" value="C:membrane"/>
    <property type="evidence" value="ECO:0007669"/>
    <property type="project" value="UniProtKB-SubCell"/>
</dbReference>
<dbReference type="FunFam" id="3.40.33.10:FF:000008">
    <property type="entry name" value="GLI pathogenesis-related 1 (Glioma)"/>
    <property type="match status" value="1"/>
</dbReference>
<dbReference type="Gene3D" id="3.40.33.10">
    <property type="entry name" value="CAP"/>
    <property type="match status" value="1"/>
</dbReference>
<dbReference type="InterPro" id="IPR018244">
    <property type="entry name" value="Allrgn_V5/Tpx1_CS"/>
</dbReference>
<dbReference type="InterPro" id="IPR014044">
    <property type="entry name" value="CAP_dom"/>
</dbReference>
<dbReference type="InterPro" id="IPR035940">
    <property type="entry name" value="CAP_sf"/>
</dbReference>
<dbReference type="InterPro" id="IPR001283">
    <property type="entry name" value="CRISP-related"/>
</dbReference>
<dbReference type="InterPro" id="IPR002413">
    <property type="entry name" value="V5_allergen-like"/>
</dbReference>
<dbReference type="PANTHER" id="PTHR10334">
    <property type="entry name" value="CYSTEINE-RICH SECRETORY PROTEIN-RELATED"/>
    <property type="match status" value="1"/>
</dbReference>
<dbReference type="Pfam" id="PF00188">
    <property type="entry name" value="CAP"/>
    <property type="match status" value="1"/>
</dbReference>
<dbReference type="PRINTS" id="PR00838">
    <property type="entry name" value="V5ALLERGEN"/>
</dbReference>
<dbReference type="PRINTS" id="PR00837">
    <property type="entry name" value="V5TPXLIKE"/>
</dbReference>
<dbReference type="SMART" id="SM00198">
    <property type="entry name" value="SCP"/>
    <property type="match status" value="1"/>
</dbReference>
<dbReference type="SUPFAM" id="SSF55797">
    <property type="entry name" value="PR-1-like"/>
    <property type="match status" value="1"/>
</dbReference>
<dbReference type="PROSITE" id="PS01009">
    <property type="entry name" value="CRISP_1"/>
    <property type="match status" value="1"/>
</dbReference>
<accession>Q9CWG1</accession>
<evidence type="ECO:0000255" key="1"/>
<evidence type="ECO:0000305" key="2"/>